<gene>
    <name evidence="1" type="primary">gltX</name>
    <name type="ordered locus">PMN2A_1806</name>
</gene>
<accession>Q46GU9</accession>
<name>SYE_PROMT</name>
<sequence>MKVRVRLAPSPTGTLHLGTARTALFNWLFAKKEGGTFLLRIEDTDIERSREEYINDIYDGLQWLGINWDESPTIQSERVNEHKQIIKTLVDKGFAYKCYASEAELDEMRETQKRNGLAPKYDNRHRNLTPEQESEFIKSGRDPVIRFKISDEKLISWNDLIRGKMTWSGKDLGGDMVIARRAPANSIGDPLYNLVVVADDSAMKISHVIRGEDHLANTAKQILLYEALDLNIPVFAHTPLILNSEGKKLSKRDGVTSISEFKKMGYTSEAMANYMTLLGWSVPEGINERFNISEVSEIFSFKKVNKASAKFDWDKLNWLNSQVIHEMSAETLLENLEPLFKENGWHLPSHEWGINLVGLIGPSMVLINDGVDQAKPFFEEQELSEDGKKQLEIKEAAVILKFILEKLEDTDAASFSKEKALDLINQATKSCEVKKGLVMKSLRAALFGTLNGPDLIQSWVLLSRFSKDRARISRLI</sequence>
<protein>
    <recommendedName>
        <fullName evidence="1">Glutamate--tRNA ligase</fullName>
        <ecNumber evidence="1">6.1.1.17</ecNumber>
    </recommendedName>
    <alternativeName>
        <fullName evidence="1">Glutamyl-tRNA synthetase</fullName>
        <shortName evidence="1">GluRS</shortName>
    </alternativeName>
</protein>
<organism>
    <name type="scientific">Prochlorococcus marinus (strain NATL2A)</name>
    <dbReference type="NCBI Taxonomy" id="59920"/>
    <lineage>
        <taxon>Bacteria</taxon>
        <taxon>Bacillati</taxon>
        <taxon>Cyanobacteriota</taxon>
        <taxon>Cyanophyceae</taxon>
        <taxon>Synechococcales</taxon>
        <taxon>Prochlorococcaceae</taxon>
        <taxon>Prochlorococcus</taxon>
    </lineage>
</organism>
<feature type="chain" id="PRO_0000237386" description="Glutamate--tRNA ligase">
    <location>
        <begin position="1"/>
        <end position="476"/>
    </location>
</feature>
<feature type="short sequence motif" description="'HIGH' region" evidence="1">
    <location>
        <begin position="9"/>
        <end position="19"/>
    </location>
</feature>
<feature type="short sequence motif" description="'KMSKS' region" evidence="1">
    <location>
        <begin position="248"/>
        <end position="252"/>
    </location>
</feature>
<feature type="binding site" evidence="1">
    <location>
        <position position="251"/>
    </location>
    <ligand>
        <name>ATP</name>
        <dbReference type="ChEBI" id="CHEBI:30616"/>
    </ligand>
</feature>
<evidence type="ECO:0000255" key="1">
    <source>
        <dbReference type="HAMAP-Rule" id="MF_00022"/>
    </source>
</evidence>
<keyword id="KW-0030">Aminoacyl-tRNA synthetase</keyword>
<keyword id="KW-0067">ATP-binding</keyword>
<keyword id="KW-0963">Cytoplasm</keyword>
<keyword id="KW-0436">Ligase</keyword>
<keyword id="KW-0547">Nucleotide-binding</keyword>
<keyword id="KW-0648">Protein biosynthesis</keyword>
<keyword id="KW-1185">Reference proteome</keyword>
<reference key="1">
    <citation type="journal article" date="2007" name="PLoS Genet.">
        <title>Patterns and implications of gene gain and loss in the evolution of Prochlorococcus.</title>
        <authorList>
            <person name="Kettler G.C."/>
            <person name="Martiny A.C."/>
            <person name="Huang K."/>
            <person name="Zucker J."/>
            <person name="Coleman M.L."/>
            <person name="Rodrigue S."/>
            <person name="Chen F."/>
            <person name="Lapidus A."/>
            <person name="Ferriera S."/>
            <person name="Johnson J."/>
            <person name="Steglich C."/>
            <person name="Church G.M."/>
            <person name="Richardson P."/>
            <person name="Chisholm S.W."/>
        </authorList>
    </citation>
    <scope>NUCLEOTIDE SEQUENCE [LARGE SCALE GENOMIC DNA]</scope>
    <source>
        <strain>NATL2A</strain>
    </source>
</reference>
<comment type="function">
    <text evidence="1">Catalyzes the attachment of glutamate to tRNA(Glu) in a two-step reaction: glutamate is first activated by ATP to form Glu-AMP and then transferred to the acceptor end of tRNA(Glu).</text>
</comment>
<comment type="catalytic activity">
    <reaction evidence="1">
        <text>tRNA(Glu) + L-glutamate + ATP = L-glutamyl-tRNA(Glu) + AMP + diphosphate</text>
        <dbReference type="Rhea" id="RHEA:23540"/>
        <dbReference type="Rhea" id="RHEA-COMP:9663"/>
        <dbReference type="Rhea" id="RHEA-COMP:9680"/>
        <dbReference type="ChEBI" id="CHEBI:29985"/>
        <dbReference type="ChEBI" id="CHEBI:30616"/>
        <dbReference type="ChEBI" id="CHEBI:33019"/>
        <dbReference type="ChEBI" id="CHEBI:78442"/>
        <dbReference type="ChEBI" id="CHEBI:78520"/>
        <dbReference type="ChEBI" id="CHEBI:456215"/>
        <dbReference type="EC" id="6.1.1.17"/>
    </reaction>
</comment>
<comment type="subunit">
    <text evidence="1">Monomer.</text>
</comment>
<comment type="subcellular location">
    <subcellularLocation>
        <location evidence="1">Cytoplasm</location>
    </subcellularLocation>
</comment>
<comment type="similarity">
    <text evidence="1">Belongs to the class-I aminoacyl-tRNA synthetase family. Glutamate--tRNA ligase type 1 subfamily.</text>
</comment>
<proteinExistence type="inferred from homology"/>
<dbReference type="EC" id="6.1.1.17" evidence="1"/>
<dbReference type="EMBL" id="CP000095">
    <property type="protein sequence ID" value="AAZ59294.1"/>
    <property type="molecule type" value="Genomic_DNA"/>
</dbReference>
<dbReference type="RefSeq" id="WP_011294439.1">
    <property type="nucleotide sequence ID" value="NC_007335.2"/>
</dbReference>
<dbReference type="SMR" id="Q46GU9"/>
<dbReference type="STRING" id="59920.PMN2A_1806"/>
<dbReference type="KEGG" id="pmn:PMN2A_1806"/>
<dbReference type="HOGENOM" id="CLU_015768_6_0_3"/>
<dbReference type="OrthoDB" id="9807503at2"/>
<dbReference type="PhylomeDB" id="Q46GU9"/>
<dbReference type="Proteomes" id="UP000002535">
    <property type="component" value="Chromosome"/>
</dbReference>
<dbReference type="GO" id="GO:0005829">
    <property type="term" value="C:cytosol"/>
    <property type="evidence" value="ECO:0007669"/>
    <property type="project" value="TreeGrafter"/>
</dbReference>
<dbReference type="GO" id="GO:0005524">
    <property type="term" value="F:ATP binding"/>
    <property type="evidence" value="ECO:0007669"/>
    <property type="project" value="UniProtKB-UniRule"/>
</dbReference>
<dbReference type="GO" id="GO:0004818">
    <property type="term" value="F:glutamate-tRNA ligase activity"/>
    <property type="evidence" value="ECO:0007669"/>
    <property type="project" value="UniProtKB-UniRule"/>
</dbReference>
<dbReference type="GO" id="GO:0000049">
    <property type="term" value="F:tRNA binding"/>
    <property type="evidence" value="ECO:0007669"/>
    <property type="project" value="InterPro"/>
</dbReference>
<dbReference type="GO" id="GO:0008270">
    <property type="term" value="F:zinc ion binding"/>
    <property type="evidence" value="ECO:0007669"/>
    <property type="project" value="InterPro"/>
</dbReference>
<dbReference type="GO" id="GO:0006424">
    <property type="term" value="P:glutamyl-tRNA aminoacylation"/>
    <property type="evidence" value="ECO:0007669"/>
    <property type="project" value="UniProtKB-UniRule"/>
</dbReference>
<dbReference type="CDD" id="cd00808">
    <property type="entry name" value="GluRS_core"/>
    <property type="match status" value="1"/>
</dbReference>
<dbReference type="FunFam" id="3.40.50.620:FF:000007">
    <property type="entry name" value="Glutamate--tRNA ligase"/>
    <property type="match status" value="1"/>
</dbReference>
<dbReference type="Gene3D" id="1.10.10.350">
    <property type="match status" value="1"/>
</dbReference>
<dbReference type="Gene3D" id="1.10.8.70">
    <property type="entry name" value="Glutamate-tRNA synthetase, class I, anticodon-binding domain 1"/>
    <property type="match status" value="1"/>
</dbReference>
<dbReference type="Gene3D" id="1.10.1160.10">
    <property type="entry name" value="Glutamyl-trna Synthetase, Domain 2"/>
    <property type="match status" value="1"/>
</dbReference>
<dbReference type="Gene3D" id="3.90.800.10">
    <property type="entry name" value="Glutamyl-tRNA Synthetase, Domain 3"/>
    <property type="match status" value="1"/>
</dbReference>
<dbReference type="Gene3D" id="3.40.50.620">
    <property type="entry name" value="HUPs"/>
    <property type="match status" value="1"/>
</dbReference>
<dbReference type="HAMAP" id="MF_00022">
    <property type="entry name" value="Glu_tRNA_synth_type1"/>
    <property type="match status" value="1"/>
</dbReference>
<dbReference type="InterPro" id="IPR045462">
    <property type="entry name" value="aa-tRNA-synth_I_cd-bd"/>
</dbReference>
<dbReference type="InterPro" id="IPR020751">
    <property type="entry name" value="aa-tRNA-synth_I_codon-bd_sub2"/>
</dbReference>
<dbReference type="InterPro" id="IPR001412">
    <property type="entry name" value="aa-tRNA-synth_I_CS"/>
</dbReference>
<dbReference type="InterPro" id="IPR008925">
    <property type="entry name" value="aa_tRNA-synth_I_cd-bd_sf"/>
</dbReference>
<dbReference type="InterPro" id="IPR004527">
    <property type="entry name" value="Glu-tRNA-ligase_bac/mito"/>
</dbReference>
<dbReference type="InterPro" id="IPR020752">
    <property type="entry name" value="Glu-tRNA-synth_I_codon-bd_sub1"/>
</dbReference>
<dbReference type="InterPro" id="IPR000924">
    <property type="entry name" value="Glu/Gln-tRNA-synth"/>
</dbReference>
<dbReference type="InterPro" id="IPR020058">
    <property type="entry name" value="Glu/Gln-tRNA-synth_Ib_cat-dom"/>
</dbReference>
<dbReference type="InterPro" id="IPR020061">
    <property type="entry name" value="Glu_tRNA_lig_a-bdl"/>
</dbReference>
<dbReference type="InterPro" id="IPR049940">
    <property type="entry name" value="GluQ/Sye"/>
</dbReference>
<dbReference type="InterPro" id="IPR033910">
    <property type="entry name" value="GluRS_core"/>
</dbReference>
<dbReference type="InterPro" id="IPR014729">
    <property type="entry name" value="Rossmann-like_a/b/a_fold"/>
</dbReference>
<dbReference type="NCBIfam" id="TIGR00464">
    <property type="entry name" value="gltX_bact"/>
    <property type="match status" value="1"/>
</dbReference>
<dbReference type="PANTHER" id="PTHR43311">
    <property type="entry name" value="GLUTAMATE--TRNA LIGASE"/>
    <property type="match status" value="1"/>
</dbReference>
<dbReference type="PANTHER" id="PTHR43311:SF2">
    <property type="entry name" value="GLUTAMATE--TRNA LIGASE, MITOCHONDRIAL-RELATED"/>
    <property type="match status" value="1"/>
</dbReference>
<dbReference type="Pfam" id="PF19269">
    <property type="entry name" value="Anticodon_2"/>
    <property type="match status" value="1"/>
</dbReference>
<dbReference type="Pfam" id="PF00749">
    <property type="entry name" value="tRNA-synt_1c"/>
    <property type="match status" value="1"/>
</dbReference>
<dbReference type="PRINTS" id="PR00987">
    <property type="entry name" value="TRNASYNTHGLU"/>
</dbReference>
<dbReference type="SUPFAM" id="SSF48163">
    <property type="entry name" value="An anticodon-binding domain of class I aminoacyl-tRNA synthetases"/>
    <property type="match status" value="1"/>
</dbReference>
<dbReference type="SUPFAM" id="SSF52374">
    <property type="entry name" value="Nucleotidylyl transferase"/>
    <property type="match status" value="1"/>
</dbReference>
<dbReference type="PROSITE" id="PS00178">
    <property type="entry name" value="AA_TRNA_LIGASE_I"/>
    <property type="match status" value="1"/>
</dbReference>